<accession>P0AET0</accession>
<accession>P26604</accession>
<comment type="function">
    <text evidence="1">Required for optimal acid stress protection. Exhibits a chaperone-like activity only at low pH by suppressing non-specifically the aggregation of denaturated periplasmic proteins.</text>
</comment>
<comment type="subcellular location">
    <subcellularLocation>
        <location evidence="1">Periplasm</location>
    </subcellularLocation>
</comment>
<comment type="similarity">
    <text evidence="1">Belongs to the HdeA family.</text>
</comment>
<organism>
    <name type="scientific">Escherichia coli O157:H7</name>
    <dbReference type="NCBI Taxonomy" id="83334"/>
    <lineage>
        <taxon>Bacteria</taxon>
        <taxon>Pseudomonadati</taxon>
        <taxon>Pseudomonadota</taxon>
        <taxon>Gammaproteobacteria</taxon>
        <taxon>Enterobacterales</taxon>
        <taxon>Enterobacteriaceae</taxon>
        <taxon>Escherichia</taxon>
    </lineage>
</organism>
<protein>
    <recommendedName>
        <fullName evidence="1">Acid stress chaperone HdeA</fullName>
    </recommendedName>
</protein>
<gene>
    <name evidence="1" type="primary">hdeA</name>
    <name type="ordered locus">Z4922</name>
    <name type="ordered locus">ECs4390</name>
</gene>
<dbReference type="EMBL" id="AE005174">
    <property type="protein sequence ID" value="AAG58651.1"/>
    <property type="molecule type" value="Genomic_DNA"/>
</dbReference>
<dbReference type="EMBL" id="BA000007">
    <property type="protein sequence ID" value="BAB37813.1"/>
    <property type="molecule type" value="Genomic_DNA"/>
</dbReference>
<dbReference type="PIR" id="F91177">
    <property type="entry name" value="F91177"/>
</dbReference>
<dbReference type="PIR" id="G86023">
    <property type="entry name" value="G86023"/>
</dbReference>
<dbReference type="RefSeq" id="NP_312417.1">
    <property type="nucleotide sequence ID" value="NC_002695.1"/>
</dbReference>
<dbReference type="RefSeq" id="WP_000756550.1">
    <property type="nucleotide sequence ID" value="NZ_VOAI01000004.1"/>
</dbReference>
<dbReference type="BMRB" id="P0AET0"/>
<dbReference type="SMR" id="P0AET0"/>
<dbReference type="STRING" id="155864.Z4922"/>
<dbReference type="GeneID" id="915753"/>
<dbReference type="GeneID" id="93778475"/>
<dbReference type="KEGG" id="ece:Z4922"/>
<dbReference type="KEGG" id="ecs:ECs_4390"/>
<dbReference type="PATRIC" id="fig|386585.9.peg.4587"/>
<dbReference type="eggNOG" id="ENOG5032Y4G">
    <property type="taxonomic scope" value="Bacteria"/>
</dbReference>
<dbReference type="HOGENOM" id="CLU_170142_1_0_6"/>
<dbReference type="OMA" id="ACTENKK"/>
<dbReference type="Proteomes" id="UP000000558">
    <property type="component" value="Chromosome"/>
</dbReference>
<dbReference type="Proteomes" id="UP000002519">
    <property type="component" value="Chromosome"/>
</dbReference>
<dbReference type="GO" id="GO:0030288">
    <property type="term" value="C:outer membrane-bounded periplasmic space"/>
    <property type="evidence" value="ECO:0007669"/>
    <property type="project" value="InterPro"/>
</dbReference>
<dbReference type="GO" id="GO:1990451">
    <property type="term" value="P:cellular stress response to acidic pH"/>
    <property type="evidence" value="ECO:0007669"/>
    <property type="project" value="UniProtKB-UniRule"/>
</dbReference>
<dbReference type="FunFam" id="1.10.890.10:FF:000001">
    <property type="entry name" value="Acid stress chaperone HdeA"/>
    <property type="match status" value="1"/>
</dbReference>
<dbReference type="Gene3D" id="1.10.890.10">
    <property type="entry name" value="HNS-dependent expression A"/>
    <property type="match status" value="1"/>
</dbReference>
<dbReference type="HAMAP" id="MF_00946">
    <property type="entry name" value="HdeA"/>
    <property type="match status" value="1"/>
</dbReference>
<dbReference type="InterPro" id="IPR024972">
    <property type="entry name" value="HdeA"/>
</dbReference>
<dbReference type="InterPro" id="IPR038303">
    <property type="entry name" value="HdeA/HdeB_sf"/>
</dbReference>
<dbReference type="InterPro" id="IPR036831">
    <property type="entry name" value="HdeA_sf"/>
</dbReference>
<dbReference type="InterPro" id="IPR010486">
    <property type="entry name" value="HNS-dep_expression_A/B"/>
</dbReference>
<dbReference type="NCBIfam" id="NF007576">
    <property type="entry name" value="PRK10208.1"/>
    <property type="match status" value="1"/>
</dbReference>
<dbReference type="Pfam" id="PF06411">
    <property type="entry name" value="HdeA"/>
    <property type="match status" value="1"/>
</dbReference>
<dbReference type="PIRSF" id="PIRSF009564">
    <property type="entry name" value="HNS-dep_expression_A"/>
    <property type="match status" value="1"/>
</dbReference>
<dbReference type="SUPFAM" id="SSF47752">
    <property type="entry name" value="Protein HNS-dependent expression A, HdeA"/>
    <property type="match status" value="1"/>
</dbReference>
<sequence length="110" mass="11858">MKKVLGVILGGLLLLPVVSNAADAQKAADNKKPVNSWTCEDFLAVDESFQPTAVGFAEALNNKDKPEDAVLDVQGIATVTPAIVQACTQDKQANFKDKVKGEWDKIKKDM</sequence>
<name>HDEA_ECO57</name>
<keyword id="KW-0143">Chaperone</keyword>
<keyword id="KW-1015">Disulfide bond</keyword>
<keyword id="KW-0574">Periplasm</keyword>
<keyword id="KW-1185">Reference proteome</keyword>
<keyword id="KW-0732">Signal</keyword>
<feature type="signal peptide" evidence="1">
    <location>
        <begin position="1"/>
        <end position="21"/>
    </location>
</feature>
<feature type="chain" id="PRO_0000045100" description="Acid stress chaperone HdeA">
    <location>
        <begin position="22"/>
        <end position="110"/>
    </location>
</feature>
<feature type="disulfide bond" evidence="1">
    <location>
        <begin position="39"/>
        <end position="87"/>
    </location>
</feature>
<proteinExistence type="inferred from homology"/>
<reference key="1">
    <citation type="journal article" date="2001" name="Nature">
        <title>Genome sequence of enterohaemorrhagic Escherichia coli O157:H7.</title>
        <authorList>
            <person name="Perna N.T."/>
            <person name="Plunkett G. III"/>
            <person name="Burland V."/>
            <person name="Mau B."/>
            <person name="Glasner J.D."/>
            <person name="Rose D.J."/>
            <person name="Mayhew G.F."/>
            <person name="Evans P.S."/>
            <person name="Gregor J."/>
            <person name="Kirkpatrick H.A."/>
            <person name="Posfai G."/>
            <person name="Hackett J."/>
            <person name="Klink S."/>
            <person name="Boutin A."/>
            <person name="Shao Y."/>
            <person name="Miller L."/>
            <person name="Grotbeck E.J."/>
            <person name="Davis N.W."/>
            <person name="Lim A."/>
            <person name="Dimalanta E.T."/>
            <person name="Potamousis K."/>
            <person name="Apodaca J."/>
            <person name="Anantharaman T.S."/>
            <person name="Lin J."/>
            <person name="Yen G."/>
            <person name="Schwartz D.C."/>
            <person name="Welch R.A."/>
            <person name="Blattner F.R."/>
        </authorList>
    </citation>
    <scope>NUCLEOTIDE SEQUENCE [LARGE SCALE GENOMIC DNA]</scope>
    <source>
        <strain>O157:H7 / EDL933 / ATCC 700927 / EHEC</strain>
    </source>
</reference>
<reference key="2">
    <citation type="journal article" date="2001" name="DNA Res.">
        <title>Complete genome sequence of enterohemorrhagic Escherichia coli O157:H7 and genomic comparison with a laboratory strain K-12.</title>
        <authorList>
            <person name="Hayashi T."/>
            <person name="Makino K."/>
            <person name="Ohnishi M."/>
            <person name="Kurokawa K."/>
            <person name="Ishii K."/>
            <person name="Yokoyama K."/>
            <person name="Han C.-G."/>
            <person name="Ohtsubo E."/>
            <person name="Nakayama K."/>
            <person name="Murata T."/>
            <person name="Tanaka M."/>
            <person name="Tobe T."/>
            <person name="Iida T."/>
            <person name="Takami H."/>
            <person name="Honda T."/>
            <person name="Sasakawa C."/>
            <person name="Ogasawara N."/>
            <person name="Yasunaga T."/>
            <person name="Kuhara S."/>
            <person name="Shiba T."/>
            <person name="Hattori M."/>
            <person name="Shinagawa H."/>
        </authorList>
    </citation>
    <scope>NUCLEOTIDE SEQUENCE [LARGE SCALE GENOMIC DNA]</scope>
    <source>
        <strain>O157:H7 / Sakai / RIMD 0509952 / EHEC</strain>
    </source>
</reference>
<evidence type="ECO:0000255" key="1">
    <source>
        <dbReference type="HAMAP-Rule" id="MF_00946"/>
    </source>
</evidence>